<evidence type="ECO:0000250" key="1"/>
<evidence type="ECO:0000250" key="2">
    <source>
        <dbReference type="UniProtKB" id="Q13822"/>
    </source>
</evidence>
<evidence type="ECO:0000250" key="3">
    <source>
        <dbReference type="UniProtKB" id="Q9R1E6"/>
    </source>
</evidence>
<evidence type="ECO:0000255" key="4"/>
<evidence type="ECO:0000305" key="5"/>
<sequence length="743" mass="84412">MSNRVVDVNSKKTGTSWKKKLMKIVIWSLAMLSFIAGLVLLGLVAAATISGSKNLPTAEYKWAGCENLGKCQIDGFSTPPLVILSFDGFAKEYLERRIVKSLELIAECGVKADRVYPSFPSKTFPNHYTMVTGLYPESHGITDNYVFDPNLYPELLAMRKHEAKEFYQAEPIWSAYKRLTGNRVHCLFWVGCYYNITGYMPDVSPDYNQELPLKERIDTLIGWLKLPETERPALITAYLHEPDQAGHMQKNVNQELEEVNNYIDILMKALHDENLLECVNLVIVSDHGMQALNNSIEVETIVNMDGLVLSKGVVARIHLNETDRSIDEVAGEIRCKIDGVKVNTINDIPLRKHYSKSKRVGDIIIEGKPGTSFYKSETNLGDHGYDYHNENMHTVMFARGPSFLQNVTVPSFQNVQYMNLWLYLLGLEGTVDNNGTIGFFDSILKNPPIRENKWDSMEECLNFGSAEVLQCDKAEGHDLKKLSLHLENCKEHQNLPIYSKNNCFQSYCENSLIIHKNRQDVRKGVIESLTFSFSRNQSVFENSFSFVNTKYSIECPKLDTKDNFFTAGSEAISKLANAQYKFPSSFMKSELISSLLSLKDETIKFVDIWVPLSIKTDEYLKHYGKLFVLSGLAVDRNLDGIADDEESKEPTHFYRILITCTGNWLSTNPPLCKKYSDTKALAFVFPILNKKTTMDCMDSDAILLDYTSTIEDVENIASFQFQIGALSHQQNVYLRRNITTSLW</sequence>
<comment type="function">
    <text evidence="1">Probable phosphodiesterase.</text>
</comment>
<comment type="cofactor">
    <cofactor evidence="2">
        <name>Zn(2+)</name>
        <dbReference type="ChEBI" id="CHEBI:29105"/>
    </cofactor>
    <text evidence="2">Binds 2 Zn(2+) ions per subunit.</text>
</comment>
<comment type="cofactor">
    <cofactor evidence="2">
        <name>Ca(2+)</name>
        <dbReference type="ChEBI" id="CHEBI:29108"/>
    </cofactor>
    <text evidence="2">Binds 1 Ca(2+) ion per subunit.</text>
</comment>
<comment type="subcellular location">
    <subcellularLocation>
        <location evidence="5">Membrane</location>
        <topology evidence="5">Single-pass type II membrane protein</topology>
    </subcellularLocation>
</comment>
<comment type="alternative products">
    <event type="alternative splicing"/>
    <isoform>
        <id>P90755-1</id>
        <name>a</name>
        <sequence type="displayed"/>
    </isoform>
    <isoform>
        <id>P90755-2</id>
        <name>b</name>
        <sequence type="described" ref="VSP_020300"/>
    </isoform>
</comment>
<comment type="similarity">
    <text evidence="5">Belongs to the nucleotide pyrophosphatase/phosphodiesterase family.</text>
</comment>
<accession>P90755</accession>
<accession>Q1NZ14</accession>
<name>ENPP2_CAEEL</name>
<keyword id="KW-0025">Alternative splicing</keyword>
<keyword id="KW-0106">Calcium</keyword>
<keyword id="KW-0325">Glycoprotein</keyword>
<keyword id="KW-0378">Hydrolase</keyword>
<keyword id="KW-0472">Membrane</keyword>
<keyword id="KW-0479">Metal-binding</keyword>
<keyword id="KW-1185">Reference proteome</keyword>
<keyword id="KW-0735">Signal-anchor</keyword>
<keyword id="KW-0812">Transmembrane</keyword>
<keyword id="KW-1133">Transmembrane helix</keyword>
<keyword id="KW-0862">Zinc</keyword>
<dbReference type="EC" id="3.1.-.-"/>
<dbReference type="EMBL" id="Z81041">
    <property type="protein sequence ID" value="CAB02785.3"/>
    <property type="molecule type" value="Genomic_DNA"/>
</dbReference>
<dbReference type="EMBL" id="Z81041">
    <property type="protein sequence ID" value="CAJ90515.1"/>
    <property type="molecule type" value="Genomic_DNA"/>
</dbReference>
<dbReference type="PIR" id="T19495">
    <property type="entry name" value="T19495"/>
</dbReference>
<dbReference type="RefSeq" id="NP_001041087.1">
    <molecule id="P90755-1"/>
    <property type="nucleotide sequence ID" value="NM_001047622.3"/>
</dbReference>
<dbReference type="RefSeq" id="NP_001041088.1">
    <molecule id="P90755-2"/>
    <property type="nucleotide sequence ID" value="NM_001047623.4"/>
</dbReference>
<dbReference type="SMR" id="P90755"/>
<dbReference type="FunCoup" id="P90755">
    <property type="interactions" value="263"/>
</dbReference>
<dbReference type="STRING" id="6239.C27A7.3a.1"/>
<dbReference type="PaxDb" id="6239-C27A7.3a"/>
<dbReference type="PeptideAtlas" id="P90755"/>
<dbReference type="EnsemblMetazoa" id="C27A7.3a.1">
    <molecule id="P90755-1"/>
    <property type="protein sequence ID" value="C27A7.3a.1"/>
    <property type="gene ID" value="WBGene00007755"/>
</dbReference>
<dbReference type="EnsemblMetazoa" id="C27A7.3b.1">
    <molecule id="P90755-2"/>
    <property type="protein sequence ID" value="C27A7.3b.1"/>
    <property type="gene ID" value="WBGene00007755"/>
</dbReference>
<dbReference type="GeneID" id="179665"/>
<dbReference type="KEGG" id="cel:CELE_C27A7.3"/>
<dbReference type="UCSC" id="C27A7.3a">
    <molecule id="P90755-1"/>
    <property type="organism name" value="c. elegans"/>
</dbReference>
<dbReference type="AGR" id="WB:WBGene00007755"/>
<dbReference type="CTD" id="179665"/>
<dbReference type="WormBase" id="C27A7.3a">
    <molecule id="P90755-1"/>
    <property type="protein sequence ID" value="CE39479"/>
    <property type="gene ID" value="WBGene00007755"/>
</dbReference>
<dbReference type="WormBase" id="C27A7.3b">
    <molecule id="P90755-2"/>
    <property type="protein sequence ID" value="CE40021"/>
    <property type="gene ID" value="WBGene00007755"/>
</dbReference>
<dbReference type="eggNOG" id="KOG2645">
    <property type="taxonomic scope" value="Eukaryota"/>
</dbReference>
<dbReference type="GeneTree" id="ENSGT00970000196710"/>
<dbReference type="InParanoid" id="P90755"/>
<dbReference type="OMA" id="HCLFWVG"/>
<dbReference type="OrthoDB" id="415411at2759"/>
<dbReference type="PhylomeDB" id="P90755"/>
<dbReference type="Reactome" id="R-CEL-196843">
    <property type="pathway name" value="Vitamin B2 (riboflavin) metabolism"/>
</dbReference>
<dbReference type="PRO" id="PR:P90755"/>
<dbReference type="Proteomes" id="UP000001940">
    <property type="component" value="Chromosome V"/>
</dbReference>
<dbReference type="Bgee" id="WBGene00007755">
    <property type="expression patterns" value="Expressed in adult organism and 1 other cell type or tissue"/>
</dbReference>
<dbReference type="ExpressionAtlas" id="P90755">
    <property type="expression patterns" value="baseline and differential"/>
</dbReference>
<dbReference type="GO" id="GO:0016020">
    <property type="term" value="C:membrane"/>
    <property type="evidence" value="ECO:0007669"/>
    <property type="project" value="UniProtKB-SubCell"/>
</dbReference>
<dbReference type="GO" id="GO:0016787">
    <property type="term" value="F:hydrolase activity"/>
    <property type="evidence" value="ECO:0007669"/>
    <property type="project" value="UniProtKB-KW"/>
</dbReference>
<dbReference type="GO" id="GO:0046872">
    <property type="term" value="F:metal ion binding"/>
    <property type="evidence" value="ECO:0007669"/>
    <property type="project" value="UniProtKB-KW"/>
</dbReference>
<dbReference type="CDD" id="cd16018">
    <property type="entry name" value="Enpp"/>
    <property type="match status" value="1"/>
</dbReference>
<dbReference type="Gene3D" id="3.30.1360.180">
    <property type="match status" value="1"/>
</dbReference>
<dbReference type="Gene3D" id="3.40.720.10">
    <property type="entry name" value="Alkaline Phosphatase, subunit A"/>
    <property type="match status" value="1"/>
</dbReference>
<dbReference type="Gene3D" id="3.40.570.10">
    <property type="entry name" value="Extracellular Endonuclease, subunit A"/>
    <property type="match status" value="1"/>
</dbReference>
<dbReference type="InterPro" id="IPR017850">
    <property type="entry name" value="Alkaline_phosphatase_core_sf"/>
</dbReference>
<dbReference type="InterPro" id="IPR044929">
    <property type="entry name" value="DNA/RNA_non-sp_Endonuclease_sf"/>
</dbReference>
<dbReference type="InterPro" id="IPR002591">
    <property type="entry name" value="Phosphodiest/P_Trfase"/>
</dbReference>
<dbReference type="PANTHER" id="PTHR10151">
    <property type="entry name" value="ECTONUCLEOTIDE PYROPHOSPHATASE/PHOSPHODIESTERASE"/>
    <property type="match status" value="1"/>
</dbReference>
<dbReference type="PANTHER" id="PTHR10151:SF114">
    <property type="entry name" value="ECTONUCLEOTIDE PYROPHOSPHATASE_PHOSPHODIESTERASE C27A7.3"/>
    <property type="match status" value="1"/>
</dbReference>
<dbReference type="Pfam" id="PF01663">
    <property type="entry name" value="Phosphodiest"/>
    <property type="match status" value="1"/>
</dbReference>
<dbReference type="SUPFAM" id="SSF53649">
    <property type="entry name" value="Alkaline phosphatase-like"/>
    <property type="match status" value="1"/>
</dbReference>
<feature type="chain" id="PRO_0000248537" description="Ectonucleotide pyrophosphatase/phosphodiesterase C27A7.3">
    <location>
        <begin position="1"/>
        <end position="743"/>
    </location>
</feature>
<feature type="topological domain" description="Cytoplasmic" evidence="4">
    <location>
        <begin position="1"/>
        <end position="23"/>
    </location>
</feature>
<feature type="transmembrane region" description="Helical; Signal-anchor for type II membrane protein" evidence="4">
    <location>
        <begin position="24"/>
        <end position="44"/>
    </location>
</feature>
<feature type="topological domain" description="Lumenal" evidence="4">
    <location>
        <begin position="45"/>
        <end position="743"/>
    </location>
</feature>
<feature type="active site" description="Nucleophile" evidence="3">
    <location>
        <position position="123"/>
    </location>
</feature>
<feature type="binding site" evidence="2">
    <location>
        <position position="87"/>
    </location>
    <ligand>
        <name>Zn(2+)</name>
        <dbReference type="ChEBI" id="CHEBI:29105"/>
        <label>1</label>
        <note>catalytic</note>
    </ligand>
</feature>
<feature type="binding site" evidence="2">
    <location>
        <position position="123"/>
    </location>
    <ligand>
        <name>Zn(2+)</name>
        <dbReference type="ChEBI" id="CHEBI:29105"/>
        <label>1</label>
        <note>catalytic</note>
    </ligand>
</feature>
<feature type="binding site" evidence="2">
    <location>
        <position position="243"/>
    </location>
    <ligand>
        <name>Zn(2+)</name>
        <dbReference type="ChEBI" id="CHEBI:29105"/>
        <label>2</label>
        <note>catalytic</note>
    </ligand>
</feature>
<feature type="binding site" evidence="2">
    <location>
        <position position="247"/>
    </location>
    <ligand>
        <name>Zn(2+)</name>
        <dbReference type="ChEBI" id="CHEBI:29105"/>
        <label>2</label>
        <note>catalytic</note>
    </ligand>
</feature>
<feature type="binding site" evidence="2">
    <location>
        <position position="286"/>
    </location>
    <ligand>
        <name>Zn(2+)</name>
        <dbReference type="ChEBI" id="CHEBI:29105"/>
        <label>1</label>
        <note>catalytic</note>
    </ligand>
</feature>
<feature type="binding site" evidence="2">
    <location>
        <position position="287"/>
    </location>
    <ligand>
        <name>Zn(2+)</name>
        <dbReference type="ChEBI" id="CHEBI:29105"/>
        <label>1</label>
        <note>catalytic</note>
    </ligand>
</feature>
<feature type="binding site" evidence="2">
    <location>
        <position position="383"/>
    </location>
    <ligand>
        <name>Zn(2+)</name>
        <dbReference type="ChEBI" id="CHEBI:29105"/>
        <label>2</label>
        <note>catalytic</note>
    </ligand>
</feature>
<feature type="binding site" evidence="2">
    <location>
        <position position="635"/>
    </location>
    <ligand>
        <name>Ca(2+)</name>
        <dbReference type="ChEBI" id="CHEBI:29108"/>
    </ligand>
</feature>
<feature type="binding site" evidence="3">
    <location>
        <position position="637"/>
    </location>
    <ligand>
        <name>Ca(2+)</name>
        <dbReference type="ChEBI" id="CHEBI:29108"/>
    </ligand>
</feature>
<feature type="binding site" evidence="2">
    <location>
        <position position="639"/>
    </location>
    <ligand>
        <name>Ca(2+)</name>
        <dbReference type="ChEBI" id="CHEBI:29108"/>
    </ligand>
</feature>
<feature type="binding site" evidence="2">
    <location>
        <position position="641"/>
    </location>
    <ligand>
        <name>Ca(2+)</name>
        <dbReference type="ChEBI" id="CHEBI:29108"/>
    </ligand>
</feature>
<feature type="binding site" evidence="2">
    <location>
        <position position="643"/>
    </location>
    <ligand>
        <name>Ca(2+)</name>
        <dbReference type="ChEBI" id="CHEBI:29108"/>
    </ligand>
</feature>
<feature type="glycosylation site" description="N-linked (GlcNAc...) asparagine" evidence="4">
    <location>
        <position position="195"/>
    </location>
</feature>
<feature type="glycosylation site" description="N-linked (GlcNAc...) asparagine" evidence="4">
    <location>
        <position position="293"/>
    </location>
</feature>
<feature type="glycosylation site" description="N-linked (GlcNAc...) asparagine" evidence="4">
    <location>
        <position position="320"/>
    </location>
</feature>
<feature type="glycosylation site" description="N-linked (GlcNAc...) asparagine" evidence="4">
    <location>
        <position position="406"/>
    </location>
</feature>
<feature type="glycosylation site" description="N-linked (GlcNAc...) asparagine" evidence="4">
    <location>
        <position position="434"/>
    </location>
</feature>
<feature type="glycosylation site" description="N-linked (GlcNAc...) asparagine" evidence="4">
    <location>
        <position position="536"/>
    </location>
</feature>
<feature type="glycosylation site" description="N-linked (GlcNAc...) asparagine" evidence="4">
    <location>
        <position position="737"/>
    </location>
</feature>
<feature type="splice variant" id="VSP_020300" description="In isoform b." evidence="5">
    <location>
        <begin position="1"/>
        <end position="30"/>
    </location>
</feature>
<protein>
    <recommendedName>
        <fullName>Ectonucleotide pyrophosphatase/phosphodiesterase C27A7.3</fullName>
        <ecNumber>3.1.-.-</ecNumber>
    </recommendedName>
</protein>
<proteinExistence type="inferred from homology"/>
<gene>
    <name type="ORF">C27A7.3</name>
</gene>
<reference key="1">
    <citation type="journal article" date="1998" name="Science">
        <title>Genome sequence of the nematode C. elegans: a platform for investigating biology.</title>
        <authorList>
            <consortium name="The C. elegans sequencing consortium"/>
        </authorList>
    </citation>
    <scope>NUCLEOTIDE SEQUENCE [LARGE SCALE GENOMIC DNA]</scope>
    <source>
        <strain>Bristol N2</strain>
    </source>
</reference>
<organism>
    <name type="scientific">Caenorhabditis elegans</name>
    <dbReference type="NCBI Taxonomy" id="6239"/>
    <lineage>
        <taxon>Eukaryota</taxon>
        <taxon>Metazoa</taxon>
        <taxon>Ecdysozoa</taxon>
        <taxon>Nematoda</taxon>
        <taxon>Chromadorea</taxon>
        <taxon>Rhabditida</taxon>
        <taxon>Rhabditina</taxon>
        <taxon>Rhabditomorpha</taxon>
        <taxon>Rhabditoidea</taxon>
        <taxon>Rhabditidae</taxon>
        <taxon>Peloderinae</taxon>
        <taxon>Caenorhabditis</taxon>
    </lineage>
</organism>